<proteinExistence type="evidence at protein level"/>
<name>TIN1_ARATH</name>
<sequence length="424" mass="46437">MGHRVLVYVGALFLILFTIFPSSSALISSPDANPPYPKAISDLKESIVKGLGFQSEEVKVSGFDIRDALVGHSVSYEFDLEIDNKVLPFKLLEDVNRWEYVDLPIFQVEQPSENGLVPMRNKKTSSDDVLPVLAPFQLSGPMELWIQDANNMRLSLPYDVDAGVLKKVILADGAVVTVKGARSVSLRHPIDLPLPLNQSSNEFASGLLSLAEQLRRASTDQESPVLSLRIVGPTSLASTSQSPDNKLKLKRLAPGLVELSSMSKDKRSLSTIGANAMTTVLTPREFTTMWPITSINGSNANLLGFEKLLTSVLGPKAQEKGSFKVLKAKVAAQTFMKIGFGIEKKLKEADVEGLSFPEWRTKPETMRMHFEVLAKVDGENVIPENVMRVDPIPLEDTIAQNVITGNVTMSKLPIIESPPSPFTL</sequence>
<protein>
    <recommendedName>
        <fullName evidence="7 8 9 10">Protein TUNICAMYCIN INDUCED 1</fullName>
    </recommendedName>
</protein>
<dbReference type="EMBL" id="AB010076">
    <property type="protein sequence ID" value="BAB11418.1"/>
    <property type="status" value="ALT_SEQ"/>
    <property type="molecule type" value="Genomic_DNA"/>
</dbReference>
<dbReference type="EMBL" id="CP002688">
    <property type="protein sequence ID" value="AED97909.1"/>
    <property type="molecule type" value="Genomic_DNA"/>
</dbReference>
<dbReference type="EMBL" id="BT004046">
    <property type="protein sequence ID" value="AAO42078.1"/>
    <property type="molecule type" value="mRNA"/>
</dbReference>
<dbReference type="EMBL" id="BT005161">
    <property type="protein sequence ID" value="AAO50694.1"/>
    <property type="molecule type" value="mRNA"/>
</dbReference>
<dbReference type="EMBL" id="KM399334">
    <property type="protein sequence ID" value="AIU49989.1"/>
    <property type="status" value="ALT_SEQ"/>
    <property type="molecule type" value="mRNA"/>
</dbReference>
<dbReference type="RefSeq" id="NP_201256.2">
    <property type="nucleotide sequence ID" value="NM_125847.4"/>
</dbReference>
<dbReference type="SMR" id="Q84JN2"/>
<dbReference type="FunCoup" id="Q84JN2">
    <property type="interactions" value="20"/>
</dbReference>
<dbReference type="STRING" id="3702.Q84JN2"/>
<dbReference type="GlyGen" id="Q84JN2">
    <property type="glycosylation" value="3 sites"/>
</dbReference>
<dbReference type="iPTMnet" id="Q84JN2"/>
<dbReference type="PaxDb" id="3702-AT5G64510.1"/>
<dbReference type="ProteomicsDB" id="191255"/>
<dbReference type="DNASU" id="836572"/>
<dbReference type="EnsemblPlants" id="AT5G64510.1">
    <property type="protein sequence ID" value="AT5G64510.1"/>
    <property type="gene ID" value="AT5G64510"/>
</dbReference>
<dbReference type="GeneID" id="836572"/>
<dbReference type="Gramene" id="AT5G64510.1">
    <property type="protein sequence ID" value="AT5G64510.1"/>
    <property type="gene ID" value="AT5G64510"/>
</dbReference>
<dbReference type="KEGG" id="ath:AT5G64510"/>
<dbReference type="Araport" id="AT5G64510"/>
<dbReference type="TAIR" id="AT5G64510">
    <property type="gene designation" value="TIN1"/>
</dbReference>
<dbReference type="eggNOG" id="ENOG502QQ67">
    <property type="taxonomic scope" value="Eukaryota"/>
</dbReference>
<dbReference type="HOGENOM" id="CLU_038643_0_0_1"/>
<dbReference type="InParanoid" id="Q84JN2"/>
<dbReference type="OMA" id="RFTTLWP"/>
<dbReference type="PRO" id="PR:Q84JN2"/>
<dbReference type="Proteomes" id="UP000006548">
    <property type="component" value="Chromosome 5"/>
</dbReference>
<dbReference type="ExpressionAtlas" id="Q84JN2">
    <property type="expression patterns" value="baseline and differential"/>
</dbReference>
<dbReference type="GO" id="GO:0005783">
    <property type="term" value="C:endoplasmic reticulum"/>
    <property type="evidence" value="ECO:0000314"/>
    <property type="project" value="UniProtKB"/>
</dbReference>
<dbReference type="GO" id="GO:0030968">
    <property type="term" value="P:endoplasmic reticulum unfolded protein response"/>
    <property type="evidence" value="ECO:0000270"/>
    <property type="project" value="UniProtKB"/>
</dbReference>
<dbReference type="GO" id="GO:0009555">
    <property type="term" value="P:pollen development"/>
    <property type="evidence" value="ECO:0000315"/>
    <property type="project" value="UniProtKB"/>
</dbReference>
<dbReference type="GO" id="GO:0010208">
    <property type="term" value="P:pollen wall assembly"/>
    <property type="evidence" value="ECO:0000315"/>
    <property type="project" value="UniProtKB"/>
</dbReference>
<dbReference type="InterPro" id="IPR053283">
    <property type="entry name" value="TUNICAMYCIN_INDUCED_1"/>
</dbReference>
<dbReference type="PANTHER" id="PTHR34454:SF2">
    <property type="entry name" value="PROTEIN TUNICAMYCIN INDUCED 1"/>
    <property type="match status" value="1"/>
</dbReference>
<dbReference type="PANTHER" id="PTHR34454">
    <property type="entry name" value="TUNICAMYCIN INDUCED PROTEIN"/>
    <property type="match status" value="1"/>
</dbReference>
<comment type="function">
    <text evidence="5 6">Involved in the regulation of pollen surface morphology, probably by modulating the secretion of proteins and/or lipids during pollen development.</text>
</comment>
<comment type="subcellular location">
    <subcellularLocation>
        <location evidence="4">Endoplasmic reticulum</location>
    </subcellularLocation>
</comment>
<comment type="tissue specificity">
    <text evidence="6">Restricted to pollen grains at high levels.</text>
</comment>
<comment type="developmental stage">
    <text evidence="6">Expressed in pollen throughout pollen development, peaking at the time of flowering and in ovules of open flowers.</text>
</comment>
<comment type="induction">
    <text evidence="3 4">Highly induced during unfolded protein response (UPR), also called endoplasmic reticulum (ER) stress response, in a bZIP60-dependent manner (PubMed:15978049, PubMed:20944397). Induced by tunicamycin, an ER stress inducer inhibiting N-linked glycosylation (at protein level) (PubMed:15978049, PubMed:20944397). Accumulates in response to dithiothreitol (DTT) and azetidine-2-carboxylate (AZC), ER stress inducers disturbing disulfide bonds formation and acting as a proline analog, respectively (PubMed:20944397).</text>
</comment>
<comment type="disruption phenotype">
    <text evidence="6">Normal growth in standard conditions, but altered pollen surface structure with pollen grains adhering to each other.</text>
</comment>
<comment type="sequence caution" evidence="11">
    <conflict type="erroneous gene model prediction">
        <sequence resource="EMBL-CDS" id="AIU49989"/>
    </conflict>
</comment>
<comment type="sequence caution" evidence="11">
    <conflict type="erroneous gene model prediction">
        <sequence resource="EMBL-CDS" id="BAB11418"/>
    </conflict>
</comment>
<reference key="1">
    <citation type="journal article" date="1998" name="DNA Res.">
        <title>Structural analysis of Arabidopsis thaliana chromosome 5. IV. Sequence features of the regions of 1,456,315 bp covered by nineteen physically assigned P1 and TAC clones.</title>
        <authorList>
            <person name="Sato S."/>
            <person name="Kaneko T."/>
            <person name="Kotani H."/>
            <person name="Nakamura Y."/>
            <person name="Asamizu E."/>
            <person name="Miyajima N."/>
            <person name="Tabata S."/>
        </authorList>
    </citation>
    <scope>NUCLEOTIDE SEQUENCE [LARGE SCALE GENOMIC DNA]</scope>
    <source>
        <strain>cv. Columbia</strain>
    </source>
</reference>
<reference key="2">
    <citation type="journal article" date="2017" name="Plant J.">
        <title>Araport11: a complete reannotation of the Arabidopsis thaliana reference genome.</title>
        <authorList>
            <person name="Cheng C.Y."/>
            <person name="Krishnakumar V."/>
            <person name="Chan A.P."/>
            <person name="Thibaud-Nissen F."/>
            <person name="Schobel S."/>
            <person name="Town C.D."/>
        </authorList>
    </citation>
    <scope>GENOME REANNOTATION</scope>
    <source>
        <strain>cv. Columbia</strain>
    </source>
</reference>
<reference key="3">
    <citation type="journal article" date="2003" name="Science">
        <title>Empirical analysis of transcriptional activity in the Arabidopsis genome.</title>
        <authorList>
            <person name="Yamada K."/>
            <person name="Lim J."/>
            <person name="Dale J.M."/>
            <person name="Chen H."/>
            <person name="Shinn P."/>
            <person name="Palm C.J."/>
            <person name="Southwick A.M."/>
            <person name="Wu H.C."/>
            <person name="Kim C.J."/>
            <person name="Nguyen M."/>
            <person name="Pham P.K."/>
            <person name="Cheuk R.F."/>
            <person name="Karlin-Newmann G."/>
            <person name="Liu S.X."/>
            <person name="Lam B."/>
            <person name="Sakano H."/>
            <person name="Wu T."/>
            <person name="Yu G."/>
            <person name="Miranda M."/>
            <person name="Quach H.L."/>
            <person name="Tripp M."/>
            <person name="Chang C.H."/>
            <person name="Lee J.M."/>
            <person name="Toriumi M.J."/>
            <person name="Chan M.M."/>
            <person name="Tang C.C."/>
            <person name="Onodera C.S."/>
            <person name="Deng J.M."/>
            <person name="Akiyama K."/>
            <person name="Ansari Y."/>
            <person name="Arakawa T."/>
            <person name="Banh J."/>
            <person name="Banno F."/>
            <person name="Bowser L."/>
            <person name="Brooks S.Y."/>
            <person name="Carninci P."/>
            <person name="Chao Q."/>
            <person name="Choy N."/>
            <person name="Enju A."/>
            <person name="Goldsmith A.D."/>
            <person name="Gurjal M."/>
            <person name="Hansen N.F."/>
            <person name="Hayashizaki Y."/>
            <person name="Johnson-Hopson C."/>
            <person name="Hsuan V.W."/>
            <person name="Iida K."/>
            <person name="Karnes M."/>
            <person name="Khan S."/>
            <person name="Koesema E."/>
            <person name="Ishida J."/>
            <person name="Jiang P.X."/>
            <person name="Jones T."/>
            <person name="Kawai J."/>
            <person name="Kamiya A."/>
            <person name="Meyers C."/>
            <person name="Nakajima M."/>
            <person name="Narusaka M."/>
            <person name="Seki M."/>
            <person name="Sakurai T."/>
            <person name="Satou M."/>
            <person name="Tamse R."/>
            <person name="Vaysberg M."/>
            <person name="Wallender E.K."/>
            <person name="Wong C."/>
            <person name="Yamamura Y."/>
            <person name="Yuan S."/>
            <person name="Shinozaki K."/>
            <person name="Davis R.W."/>
            <person name="Theologis A."/>
            <person name="Ecker J.R."/>
        </authorList>
    </citation>
    <scope>NUCLEOTIDE SEQUENCE [LARGE SCALE MRNA]</scope>
    <source>
        <strain>cv. Columbia</strain>
    </source>
</reference>
<reference key="4">
    <citation type="journal article" date="2014" name="Nat. Commun.">
        <title>Resolution of deep angiosperm phylogeny using conserved nuclear genes and estimates of early divergence times.</title>
        <authorList>
            <person name="Zeng L."/>
            <person name="Zhang Q."/>
            <person name="Sun R."/>
            <person name="Kong H."/>
            <person name="Zhang N."/>
            <person name="Ma H."/>
        </authorList>
    </citation>
    <scope>NUCLEOTIDE SEQUENCE [LARGE SCALE MRNA] OF 38-342</scope>
</reference>
<reference key="5">
    <citation type="journal article" date="2005" name="FEBS J.">
        <title>Gene expression in response to endoplasmic reticulum stress in Arabidopsis thaliana.</title>
        <authorList>
            <person name="Kamauchi S."/>
            <person name="Nakatani H."/>
            <person name="Nakano C."/>
            <person name="Urade R."/>
        </authorList>
    </citation>
    <scope>INDUCTION BY STRESS AND TUNICAMYCIN</scope>
    <source>
        <strain>cv. Columbia</strain>
    </source>
</reference>
<reference key="6">
    <citation type="journal article" date="2010" name="Biosci. Biotechnol. Biochem.">
        <title>Characterization of a plant-specific gene induced by endoplasmic reticulum stress in Arabidopsis thaliana.</title>
        <authorList>
            <person name="Iwata Y."/>
            <person name="Nishino T."/>
            <person name="Takayama S."/>
            <person name="Koizumi N."/>
        </authorList>
    </citation>
    <scope>INDUCTION BY STRESS; DITHIOTHREITOL; AZETIDINE-2-CARBOXYLATE AND TUNICAMYCIN</scope>
    <scope>SUBCELLULAR LOCATION</scope>
    <source>
        <strain>cv. Columbia</strain>
    </source>
</reference>
<reference key="7">
    <citation type="journal article" date="2012" name="Plant Biotechnol.">
        <title>Role of the plant-specific endoplasmic reticulum stress-inducible gene TIN1 in the formation of pollen surface structure in Arabidopsis thaliana.</title>
        <authorList>
            <person name="Iwata Y."/>
            <person name="Nishino T."/>
            <person name="Iwano M."/>
            <person name="Takayama S."/>
            <person name="Koizumi N."/>
        </authorList>
    </citation>
    <scope>FUNCTION</scope>
    <scope>DISRUPTION PHENOTYPE</scope>
    <scope>TISSUE SPECIFICITY</scope>
    <scope>DEVELOPMENTAL STAGE</scope>
    <source>
        <strain>cv. Columbia</strain>
    </source>
</reference>
<reference key="8">
    <citation type="journal article" date="2017" name="Plant Biotechnol.">
        <title>Overexpression of the endoplasmic reticulum stress-inducible gene TIN1 causes abnormal pollen surface morphology in Arabidopsis.</title>
        <authorList>
            <person name="Iwata Y."/>
            <person name="Nishino T."/>
            <person name="Koizumi N."/>
        </authorList>
    </citation>
    <scope>FUNCTION</scope>
    <source>
        <strain>cv. Columbia</strain>
    </source>
</reference>
<feature type="signal peptide" evidence="1">
    <location>
        <begin position="1"/>
        <end position="25"/>
    </location>
</feature>
<feature type="chain" id="PRO_5014311964" description="Protein TUNICAMYCIN INDUCED 1">
    <location>
        <begin position="26"/>
        <end position="424"/>
    </location>
</feature>
<feature type="glycosylation site" description="N-linked (GlcNAc...) asparagine" evidence="2">
    <location>
        <position position="197"/>
    </location>
</feature>
<feature type="glycosylation site" description="N-linked (GlcNAc...) asparagine" evidence="2">
    <location>
        <position position="296"/>
    </location>
</feature>
<feature type="glycosylation site" description="N-linked (GlcNAc...) asparagine" evidence="2">
    <location>
        <position position="406"/>
    </location>
</feature>
<accession>Q84JN2</accession>
<accession>A0A097PPM7</accession>
<accession>Q9FLG7</accession>
<keyword id="KW-0256">Endoplasmic reticulum</keyword>
<keyword id="KW-0325">Glycoprotein</keyword>
<keyword id="KW-1185">Reference proteome</keyword>
<keyword id="KW-0732">Signal</keyword>
<keyword id="KW-0834">Unfolded protein response</keyword>
<evidence type="ECO:0000255" key="1"/>
<evidence type="ECO:0000255" key="2">
    <source>
        <dbReference type="PROSITE-ProRule" id="PRU00498"/>
    </source>
</evidence>
<evidence type="ECO:0000269" key="3">
    <source>
    </source>
</evidence>
<evidence type="ECO:0000269" key="4">
    <source>
    </source>
</evidence>
<evidence type="ECO:0000269" key="5">
    <source>
    </source>
</evidence>
<evidence type="ECO:0000269" key="6">
    <source ref="7"/>
</evidence>
<evidence type="ECO:0000303" key="7">
    <source>
    </source>
</evidence>
<evidence type="ECO:0000303" key="8">
    <source>
    </source>
</evidence>
<evidence type="ECO:0000303" key="9">
    <source>
    </source>
</evidence>
<evidence type="ECO:0000303" key="10">
    <source ref="7"/>
</evidence>
<evidence type="ECO:0000305" key="11"/>
<evidence type="ECO:0000312" key="12">
    <source>
        <dbReference type="Araport" id="AT5G64510"/>
    </source>
</evidence>
<evidence type="ECO:0000312" key="13">
    <source>
        <dbReference type="EMBL" id="BAB11418.1"/>
    </source>
</evidence>
<gene>
    <name evidence="7 8 9 10" type="primary">TIN1</name>
    <name evidence="12" type="ordered locus">At5g64510</name>
    <name evidence="13" type="ORF">MUB3.3</name>
</gene>
<organism>
    <name type="scientific">Arabidopsis thaliana</name>
    <name type="common">Mouse-ear cress</name>
    <dbReference type="NCBI Taxonomy" id="3702"/>
    <lineage>
        <taxon>Eukaryota</taxon>
        <taxon>Viridiplantae</taxon>
        <taxon>Streptophyta</taxon>
        <taxon>Embryophyta</taxon>
        <taxon>Tracheophyta</taxon>
        <taxon>Spermatophyta</taxon>
        <taxon>Magnoliopsida</taxon>
        <taxon>eudicotyledons</taxon>
        <taxon>Gunneridae</taxon>
        <taxon>Pentapetalae</taxon>
        <taxon>rosids</taxon>
        <taxon>malvids</taxon>
        <taxon>Brassicales</taxon>
        <taxon>Brassicaceae</taxon>
        <taxon>Camelineae</taxon>
        <taxon>Arabidopsis</taxon>
    </lineage>
</organism>